<dbReference type="EC" id="3.6.1.23" evidence="1"/>
<dbReference type="EMBL" id="CP000438">
    <property type="protein sequence ID" value="ABJ14704.1"/>
    <property type="molecule type" value="Genomic_DNA"/>
</dbReference>
<dbReference type="RefSeq" id="WP_003096567.1">
    <property type="nucleotide sequence ID" value="NZ_CP034244.1"/>
</dbReference>
<dbReference type="SMR" id="Q02E41"/>
<dbReference type="KEGG" id="pau:PA14_70260"/>
<dbReference type="PseudoCAP" id="PA14_70260"/>
<dbReference type="HOGENOM" id="CLU_068508_1_1_6"/>
<dbReference type="BioCyc" id="PAER208963:G1G74-5914-MONOMER"/>
<dbReference type="UniPathway" id="UPA00610">
    <property type="reaction ID" value="UER00666"/>
</dbReference>
<dbReference type="Proteomes" id="UP000000653">
    <property type="component" value="Chromosome"/>
</dbReference>
<dbReference type="GO" id="GO:0004170">
    <property type="term" value="F:dUTP diphosphatase activity"/>
    <property type="evidence" value="ECO:0007669"/>
    <property type="project" value="UniProtKB-UniRule"/>
</dbReference>
<dbReference type="GO" id="GO:0000287">
    <property type="term" value="F:magnesium ion binding"/>
    <property type="evidence" value="ECO:0007669"/>
    <property type="project" value="UniProtKB-UniRule"/>
</dbReference>
<dbReference type="GO" id="GO:0006226">
    <property type="term" value="P:dUMP biosynthetic process"/>
    <property type="evidence" value="ECO:0007669"/>
    <property type="project" value="UniProtKB-UniRule"/>
</dbReference>
<dbReference type="GO" id="GO:0046081">
    <property type="term" value="P:dUTP catabolic process"/>
    <property type="evidence" value="ECO:0007669"/>
    <property type="project" value="InterPro"/>
</dbReference>
<dbReference type="CDD" id="cd07557">
    <property type="entry name" value="trimeric_dUTPase"/>
    <property type="match status" value="1"/>
</dbReference>
<dbReference type="FunFam" id="2.70.40.10:FF:000002">
    <property type="entry name" value="dUTP diphosphatase"/>
    <property type="match status" value="1"/>
</dbReference>
<dbReference type="Gene3D" id="2.70.40.10">
    <property type="match status" value="1"/>
</dbReference>
<dbReference type="HAMAP" id="MF_00116">
    <property type="entry name" value="dUTPase_bact"/>
    <property type="match status" value="1"/>
</dbReference>
<dbReference type="InterPro" id="IPR008181">
    <property type="entry name" value="dUTPase"/>
</dbReference>
<dbReference type="InterPro" id="IPR029054">
    <property type="entry name" value="dUTPase-like"/>
</dbReference>
<dbReference type="InterPro" id="IPR036157">
    <property type="entry name" value="dUTPase-like_sf"/>
</dbReference>
<dbReference type="InterPro" id="IPR033704">
    <property type="entry name" value="dUTPase_trimeric"/>
</dbReference>
<dbReference type="NCBIfam" id="TIGR00576">
    <property type="entry name" value="dut"/>
    <property type="match status" value="1"/>
</dbReference>
<dbReference type="NCBIfam" id="NF001862">
    <property type="entry name" value="PRK00601.1"/>
    <property type="match status" value="1"/>
</dbReference>
<dbReference type="PANTHER" id="PTHR11241">
    <property type="entry name" value="DEOXYURIDINE 5'-TRIPHOSPHATE NUCLEOTIDOHYDROLASE"/>
    <property type="match status" value="1"/>
</dbReference>
<dbReference type="PANTHER" id="PTHR11241:SF0">
    <property type="entry name" value="DEOXYURIDINE 5'-TRIPHOSPHATE NUCLEOTIDOHYDROLASE"/>
    <property type="match status" value="1"/>
</dbReference>
<dbReference type="Pfam" id="PF00692">
    <property type="entry name" value="dUTPase"/>
    <property type="match status" value="1"/>
</dbReference>
<dbReference type="SUPFAM" id="SSF51283">
    <property type="entry name" value="dUTPase-like"/>
    <property type="match status" value="1"/>
</dbReference>
<comment type="function">
    <text evidence="1">This enzyme is involved in nucleotide metabolism: it produces dUMP, the immediate precursor of thymidine nucleotides and it decreases the intracellular concentration of dUTP so that uracil cannot be incorporated into DNA.</text>
</comment>
<comment type="catalytic activity">
    <reaction evidence="1">
        <text>dUTP + H2O = dUMP + diphosphate + H(+)</text>
        <dbReference type="Rhea" id="RHEA:10248"/>
        <dbReference type="ChEBI" id="CHEBI:15377"/>
        <dbReference type="ChEBI" id="CHEBI:15378"/>
        <dbReference type="ChEBI" id="CHEBI:33019"/>
        <dbReference type="ChEBI" id="CHEBI:61555"/>
        <dbReference type="ChEBI" id="CHEBI:246422"/>
        <dbReference type="EC" id="3.6.1.23"/>
    </reaction>
</comment>
<comment type="cofactor">
    <cofactor evidence="1">
        <name>Mg(2+)</name>
        <dbReference type="ChEBI" id="CHEBI:18420"/>
    </cofactor>
</comment>
<comment type="pathway">
    <text evidence="1">Pyrimidine metabolism; dUMP biosynthesis; dUMP from dCTP (dUTP route): step 2/2.</text>
</comment>
<comment type="similarity">
    <text evidence="1">Belongs to the dUTPase family.</text>
</comment>
<accession>Q02E41</accession>
<reference key="1">
    <citation type="journal article" date="2006" name="Genome Biol.">
        <title>Genomic analysis reveals that Pseudomonas aeruginosa virulence is combinatorial.</title>
        <authorList>
            <person name="Lee D.G."/>
            <person name="Urbach J.M."/>
            <person name="Wu G."/>
            <person name="Liberati N.T."/>
            <person name="Feinbaum R.L."/>
            <person name="Miyata S."/>
            <person name="Diggins L.T."/>
            <person name="He J."/>
            <person name="Saucier M."/>
            <person name="Deziel E."/>
            <person name="Friedman L."/>
            <person name="Li L."/>
            <person name="Grills G."/>
            <person name="Montgomery K."/>
            <person name="Kucherlapati R."/>
            <person name="Rahme L.G."/>
            <person name="Ausubel F.M."/>
        </authorList>
    </citation>
    <scope>NUCLEOTIDE SEQUENCE [LARGE SCALE GENOMIC DNA]</scope>
    <source>
        <strain>UCBPP-PA14</strain>
    </source>
</reference>
<proteinExistence type="inferred from homology"/>
<sequence length="151" mass="15991">MHSLQAKILDPRLGSDFPLPQYATPGSAGLDLRAMLKEDTVLGPGQTLLIPTGLSIYIADPGLAALVLPRSGLGHKHGIVLGNLVGLIDSDYQGELMVSCWNRGESPFTIAVGERIAQLVLVPVVQAHFELVEQFDESQRGAGGFGHSGSH</sequence>
<organism>
    <name type="scientific">Pseudomonas aeruginosa (strain UCBPP-PA14)</name>
    <dbReference type="NCBI Taxonomy" id="208963"/>
    <lineage>
        <taxon>Bacteria</taxon>
        <taxon>Pseudomonadati</taxon>
        <taxon>Pseudomonadota</taxon>
        <taxon>Gammaproteobacteria</taxon>
        <taxon>Pseudomonadales</taxon>
        <taxon>Pseudomonadaceae</taxon>
        <taxon>Pseudomonas</taxon>
    </lineage>
</organism>
<evidence type="ECO:0000255" key="1">
    <source>
        <dbReference type="HAMAP-Rule" id="MF_00116"/>
    </source>
</evidence>
<protein>
    <recommendedName>
        <fullName evidence="1">Deoxyuridine 5'-triphosphate nucleotidohydrolase</fullName>
        <shortName evidence="1">dUTPase</shortName>
        <ecNumber evidence="1">3.6.1.23</ecNumber>
    </recommendedName>
    <alternativeName>
        <fullName evidence="1">dUTP pyrophosphatase</fullName>
    </alternativeName>
</protein>
<keyword id="KW-0378">Hydrolase</keyword>
<keyword id="KW-0460">Magnesium</keyword>
<keyword id="KW-0479">Metal-binding</keyword>
<keyword id="KW-0546">Nucleotide metabolism</keyword>
<feature type="chain" id="PRO_1000015494" description="Deoxyuridine 5'-triphosphate nucleotidohydrolase">
    <location>
        <begin position="1"/>
        <end position="151"/>
    </location>
</feature>
<feature type="binding site" evidence="1">
    <location>
        <begin position="70"/>
        <end position="72"/>
    </location>
    <ligand>
        <name>substrate</name>
    </ligand>
</feature>
<feature type="binding site" evidence="1">
    <location>
        <position position="83"/>
    </location>
    <ligand>
        <name>substrate</name>
    </ligand>
</feature>
<feature type="binding site" evidence="1">
    <location>
        <begin position="87"/>
        <end position="89"/>
    </location>
    <ligand>
        <name>substrate</name>
    </ligand>
</feature>
<feature type="binding site" evidence="1">
    <location>
        <position position="97"/>
    </location>
    <ligand>
        <name>substrate</name>
    </ligand>
</feature>
<name>DUT_PSEAB</name>
<gene>
    <name evidence="1" type="primary">dut</name>
    <name type="ordered locus">PA14_70260</name>
</gene>